<sequence>MSTYAFNRELRLLTPEHYQKVFQQAHSAGSPHLTIIARANNLSHPRLGLAVPKKQIKTAVGRNRFKRICRESFRLHQNQLANKDFVVIAKKSAQDLSNEELFNLLGKLWQRLSRPSRG</sequence>
<keyword id="KW-0255">Endonuclease</keyword>
<keyword id="KW-0378">Hydrolase</keyword>
<keyword id="KW-0540">Nuclease</keyword>
<keyword id="KW-0694">RNA-binding</keyword>
<keyword id="KW-0819">tRNA processing</keyword>
<accession>A5F483</accession>
<accession>C3M322</accession>
<gene>
    <name evidence="1" type="primary">rnpA</name>
    <name type="ordered locus">VC0395_A2513</name>
    <name type="ordered locus">VC395_0174</name>
</gene>
<name>RNPA_VIBC3</name>
<organism>
    <name type="scientific">Vibrio cholerae serotype O1 (strain ATCC 39541 / Classical Ogawa 395 / O395)</name>
    <dbReference type="NCBI Taxonomy" id="345073"/>
    <lineage>
        <taxon>Bacteria</taxon>
        <taxon>Pseudomonadati</taxon>
        <taxon>Pseudomonadota</taxon>
        <taxon>Gammaproteobacteria</taxon>
        <taxon>Vibrionales</taxon>
        <taxon>Vibrionaceae</taxon>
        <taxon>Vibrio</taxon>
    </lineage>
</organism>
<protein>
    <recommendedName>
        <fullName evidence="1">Ribonuclease P protein component</fullName>
        <shortName evidence="1">RNase P protein</shortName>
        <shortName evidence="1">RNaseP protein</shortName>
        <ecNumber evidence="1">3.1.26.5</ecNumber>
    </recommendedName>
    <alternativeName>
        <fullName evidence="1">Protein C5</fullName>
    </alternativeName>
</protein>
<feature type="chain" id="PRO_1000071782" description="Ribonuclease P protein component">
    <location>
        <begin position="1"/>
        <end position="118"/>
    </location>
</feature>
<proteinExistence type="inferred from homology"/>
<evidence type="ECO:0000255" key="1">
    <source>
        <dbReference type="HAMAP-Rule" id="MF_00227"/>
    </source>
</evidence>
<comment type="function">
    <text evidence="1">RNaseP catalyzes the removal of the 5'-leader sequence from pre-tRNA to produce the mature 5'-terminus. It can also cleave other RNA substrates such as 4.5S RNA. The protein component plays an auxiliary but essential role in vivo by binding to the 5'-leader sequence and broadening the substrate specificity of the ribozyme.</text>
</comment>
<comment type="catalytic activity">
    <reaction evidence="1">
        <text>Endonucleolytic cleavage of RNA, removing 5'-extranucleotides from tRNA precursor.</text>
        <dbReference type="EC" id="3.1.26.5"/>
    </reaction>
</comment>
<comment type="subunit">
    <text evidence="1">Consists of a catalytic RNA component (M1 or rnpB) and a protein subunit.</text>
</comment>
<comment type="similarity">
    <text evidence="1">Belongs to the RnpA family.</text>
</comment>
<dbReference type="EC" id="3.1.26.5" evidence="1"/>
<dbReference type="EMBL" id="CP000627">
    <property type="protein sequence ID" value="ABQ21304.1"/>
    <property type="molecule type" value="Genomic_DNA"/>
</dbReference>
<dbReference type="EMBL" id="CP001235">
    <property type="protein sequence ID" value="ACP08201.1"/>
    <property type="molecule type" value="Genomic_DNA"/>
</dbReference>
<dbReference type="SMR" id="A5F483"/>
<dbReference type="KEGG" id="vco:VC0395_A2513"/>
<dbReference type="KEGG" id="vcr:VC395_0174"/>
<dbReference type="PATRIC" id="fig|345073.21.peg.165"/>
<dbReference type="eggNOG" id="COG0594">
    <property type="taxonomic scope" value="Bacteria"/>
</dbReference>
<dbReference type="HOGENOM" id="CLU_117179_11_0_6"/>
<dbReference type="OrthoDB" id="9796422at2"/>
<dbReference type="Proteomes" id="UP000000249">
    <property type="component" value="Chromosome 2"/>
</dbReference>
<dbReference type="GO" id="GO:0030677">
    <property type="term" value="C:ribonuclease P complex"/>
    <property type="evidence" value="ECO:0007669"/>
    <property type="project" value="TreeGrafter"/>
</dbReference>
<dbReference type="GO" id="GO:0042781">
    <property type="term" value="F:3'-tRNA processing endoribonuclease activity"/>
    <property type="evidence" value="ECO:0007669"/>
    <property type="project" value="TreeGrafter"/>
</dbReference>
<dbReference type="GO" id="GO:0004526">
    <property type="term" value="F:ribonuclease P activity"/>
    <property type="evidence" value="ECO:0007669"/>
    <property type="project" value="UniProtKB-UniRule"/>
</dbReference>
<dbReference type="GO" id="GO:0000049">
    <property type="term" value="F:tRNA binding"/>
    <property type="evidence" value="ECO:0007669"/>
    <property type="project" value="UniProtKB-UniRule"/>
</dbReference>
<dbReference type="GO" id="GO:0001682">
    <property type="term" value="P:tRNA 5'-leader removal"/>
    <property type="evidence" value="ECO:0007669"/>
    <property type="project" value="UniProtKB-UniRule"/>
</dbReference>
<dbReference type="FunFam" id="3.30.230.10:FF:000016">
    <property type="entry name" value="Ribonuclease P protein component"/>
    <property type="match status" value="1"/>
</dbReference>
<dbReference type="Gene3D" id="3.30.230.10">
    <property type="match status" value="1"/>
</dbReference>
<dbReference type="HAMAP" id="MF_00227">
    <property type="entry name" value="RNase_P"/>
    <property type="match status" value="1"/>
</dbReference>
<dbReference type="InterPro" id="IPR020568">
    <property type="entry name" value="Ribosomal_Su5_D2-typ_SF"/>
</dbReference>
<dbReference type="InterPro" id="IPR014721">
    <property type="entry name" value="Ribsml_uS5_D2-typ_fold_subgr"/>
</dbReference>
<dbReference type="InterPro" id="IPR000100">
    <property type="entry name" value="RNase_P"/>
</dbReference>
<dbReference type="NCBIfam" id="TIGR00188">
    <property type="entry name" value="rnpA"/>
    <property type="match status" value="1"/>
</dbReference>
<dbReference type="PANTHER" id="PTHR33992">
    <property type="entry name" value="RIBONUCLEASE P PROTEIN COMPONENT"/>
    <property type="match status" value="1"/>
</dbReference>
<dbReference type="PANTHER" id="PTHR33992:SF1">
    <property type="entry name" value="RIBONUCLEASE P PROTEIN COMPONENT"/>
    <property type="match status" value="1"/>
</dbReference>
<dbReference type="Pfam" id="PF00825">
    <property type="entry name" value="Ribonuclease_P"/>
    <property type="match status" value="1"/>
</dbReference>
<dbReference type="SUPFAM" id="SSF54211">
    <property type="entry name" value="Ribosomal protein S5 domain 2-like"/>
    <property type="match status" value="1"/>
</dbReference>
<reference key="1">
    <citation type="submission" date="2007-03" db="EMBL/GenBank/DDBJ databases">
        <authorList>
            <person name="Heidelberg J."/>
        </authorList>
    </citation>
    <scope>NUCLEOTIDE SEQUENCE [LARGE SCALE GENOMIC DNA]</scope>
    <source>
        <strain>ATCC 39541 / Classical Ogawa 395 / O395</strain>
    </source>
</reference>
<reference key="2">
    <citation type="journal article" date="2008" name="PLoS ONE">
        <title>A recalibrated molecular clock and independent origins for the cholera pandemic clones.</title>
        <authorList>
            <person name="Feng L."/>
            <person name="Reeves P.R."/>
            <person name="Lan R."/>
            <person name="Ren Y."/>
            <person name="Gao C."/>
            <person name="Zhou Z."/>
            <person name="Ren Y."/>
            <person name="Cheng J."/>
            <person name="Wang W."/>
            <person name="Wang J."/>
            <person name="Qian W."/>
            <person name="Li D."/>
            <person name="Wang L."/>
        </authorList>
    </citation>
    <scope>NUCLEOTIDE SEQUENCE [LARGE SCALE GENOMIC DNA]</scope>
    <source>
        <strain>ATCC 39541 / Classical Ogawa 395 / O395</strain>
    </source>
</reference>